<feature type="chain" id="PRO_0000108788" description="Phospho-N-acetylmuramoyl-pentapeptide-transferase">
    <location>
        <begin position="1"/>
        <end position="368"/>
    </location>
</feature>
<feature type="transmembrane region" description="Helical" evidence="1">
    <location>
        <begin position="2"/>
        <end position="22"/>
    </location>
</feature>
<feature type="transmembrane region" description="Helical" evidence="1">
    <location>
        <begin position="51"/>
        <end position="71"/>
    </location>
</feature>
<feature type="transmembrane region" description="Helical" evidence="1">
    <location>
        <begin position="80"/>
        <end position="100"/>
    </location>
</feature>
<feature type="transmembrane region" description="Helical" evidence="1">
    <location>
        <begin position="117"/>
        <end position="137"/>
    </location>
</feature>
<feature type="transmembrane region" description="Helical" evidence="1">
    <location>
        <begin position="167"/>
        <end position="187"/>
    </location>
</feature>
<feature type="transmembrane region" description="Helical" evidence="1">
    <location>
        <begin position="193"/>
        <end position="213"/>
    </location>
</feature>
<feature type="transmembrane region" description="Helical" evidence="1">
    <location>
        <begin position="234"/>
        <end position="254"/>
    </location>
</feature>
<feature type="transmembrane region" description="Helical" evidence="1">
    <location>
        <begin position="271"/>
        <end position="291"/>
    </location>
</feature>
<feature type="transmembrane region" description="Helical" evidence="1">
    <location>
        <begin position="340"/>
        <end position="360"/>
    </location>
</feature>
<accession>Q8G4Q7</accession>
<proteinExistence type="inferred from homology"/>
<evidence type="ECO:0000255" key="1">
    <source>
        <dbReference type="HAMAP-Rule" id="MF_00038"/>
    </source>
</evidence>
<organism>
    <name type="scientific">Bifidobacterium longum (strain NCC 2705)</name>
    <dbReference type="NCBI Taxonomy" id="206672"/>
    <lineage>
        <taxon>Bacteria</taxon>
        <taxon>Bacillati</taxon>
        <taxon>Actinomycetota</taxon>
        <taxon>Actinomycetes</taxon>
        <taxon>Bifidobacteriales</taxon>
        <taxon>Bifidobacteriaceae</taxon>
        <taxon>Bifidobacterium</taxon>
    </lineage>
</organism>
<name>MRAY_BIFLO</name>
<keyword id="KW-0131">Cell cycle</keyword>
<keyword id="KW-0132">Cell division</keyword>
<keyword id="KW-1003">Cell membrane</keyword>
<keyword id="KW-0133">Cell shape</keyword>
<keyword id="KW-0961">Cell wall biogenesis/degradation</keyword>
<keyword id="KW-0460">Magnesium</keyword>
<keyword id="KW-0472">Membrane</keyword>
<keyword id="KW-0479">Metal-binding</keyword>
<keyword id="KW-0573">Peptidoglycan synthesis</keyword>
<keyword id="KW-1185">Reference proteome</keyword>
<keyword id="KW-0808">Transferase</keyword>
<keyword id="KW-0812">Transmembrane</keyword>
<keyword id="KW-1133">Transmembrane helix</keyword>
<sequence>MIALIIGMLVSLIVTLVGTPLLIRLVHKLHYGQYIRQDGPQSHLVKRGTPTLGGVVINFAILLGWASSALYRYLRSGDVPSWSAALVLFAMLSMGLLGFIDDFAKVRKKQNEGLSVGGKFIGQFIFATIYAVLALLIPTKSGFPSAQAGISFIEQPFFNFDFAGRAVAIILFVIWVNFLMTAWTNAVNLTDGLDGLAAGSSMIAFTGFGIIAFWESYHIKGGSHGGYSYAVSDPLDLTVIAVCAAVACFGFLWYNSNPASIFMGDTGSLALGGLFAALSIATHTEFLAVVLGGLYVMEAMSDVIQVGYFKMTHKRVFKMAPIHHHFELEGWTETKVVVRFWMIELIFVLLALTIFYGDWVTRSGLLFS</sequence>
<comment type="function">
    <text evidence="1">Catalyzes the initial step of the lipid cycle reactions in the biosynthesis of the cell wall peptidoglycan: transfers peptidoglycan precursor phospho-MurNAc-pentapeptide from UDP-MurNAc-pentapeptide onto the lipid carrier undecaprenyl phosphate, yielding undecaprenyl-pyrophosphoryl-MurNAc-pentapeptide, known as lipid I.</text>
</comment>
<comment type="catalytic activity">
    <reaction evidence="1">
        <text>UDP-N-acetyl-alpha-D-muramoyl-L-alanyl-gamma-D-glutamyl-meso-2,6-diaminopimeloyl-D-alanyl-D-alanine + di-trans,octa-cis-undecaprenyl phosphate = di-trans,octa-cis-undecaprenyl diphospho-N-acetyl-alpha-D-muramoyl-L-alanyl-D-glutamyl-meso-2,6-diaminopimeloyl-D-alanyl-D-alanine + UMP</text>
        <dbReference type="Rhea" id="RHEA:28386"/>
        <dbReference type="ChEBI" id="CHEBI:57865"/>
        <dbReference type="ChEBI" id="CHEBI:60392"/>
        <dbReference type="ChEBI" id="CHEBI:61386"/>
        <dbReference type="ChEBI" id="CHEBI:61387"/>
        <dbReference type="EC" id="2.7.8.13"/>
    </reaction>
</comment>
<comment type="cofactor">
    <cofactor evidence="1">
        <name>Mg(2+)</name>
        <dbReference type="ChEBI" id="CHEBI:18420"/>
    </cofactor>
</comment>
<comment type="pathway">
    <text evidence="1">Cell wall biogenesis; peptidoglycan biosynthesis.</text>
</comment>
<comment type="subcellular location">
    <subcellularLocation>
        <location evidence="1">Cell membrane</location>
        <topology evidence="1">Multi-pass membrane protein</topology>
    </subcellularLocation>
</comment>
<comment type="similarity">
    <text evidence="1">Belongs to the glycosyltransferase 4 family. MraY subfamily.</text>
</comment>
<gene>
    <name evidence="1" type="primary">mraY</name>
    <name type="ordered locus">BL1320</name>
</gene>
<protein>
    <recommendedName>
        <fullName evidence="1">Phospho-N-acetylmuramoyl-pentapeptide-transferase</fullName>
        <ecNumber evidence="1">2.7.8.13</ecNumber>
    </recommendedName>
    <alternativeName>
        <fullName evidence="1">UDP-MurNAc-pentapeptide phosphotransferase</fullName>
    </alternativeName>
</protein>
<reference key="1">
    <citation type="journal article" date="2002" name="Proc. Natl. Acad. Sci. U.S.A.">
        <title>The genome sequence of Bifidobacterium longum reflects its adaptation to the human gastrointestinal tract.</title>
        <authorList>
            <person name="Schell M.A."/>
            <person name="Karmirantzou M."/>
            <person name="Snel B."/>
            <person name="Vilanova D."/>
            <person name="Berger B."/>
            <person name="Pessi G."/>
            <person name="Zwahlen M.-C."/>
            <person name="Desiere F."/>
            <person name="Bork P."/>
            <person name="Delley M."/>
            <person name="Pridmore R.D."/>
            <person name="Arigoni F."/>
        </authorList>
    </citation>
    <scope>NUCLEOTIDE SEQUENCE [LARGE SCALE GENOMIC DNA]</scope>
    <source>
        <strain>NCC 2705</strain>
    </source>
</reference>
<dbReference type="EC" id="2.7.8.13" evidence="1"/>
<dbReference type="EMBL" id="AE014295">
    <property type="protein sequence ID" value="AAN25120.1"/>
    <property type="molecule type" value="Genomic_DNA"/>
</dbReference>
<dbReference type="RefSeq" id="NP_696484.1">
    <property type="nucleotide sequence ID" value="NC_004307.2"/>
</dbReference>
<dbReference type="RefSeq" id="WP_007052547.1">
    <property type="nucleotide sequence ID" value="NC_004307.2"/>
</dbReference>
<dbReference type="SMR" id="Q8G4Q7"/>
<dbReference type="STRING" id="206672.BL1320"/>
<dbReference type="EnsemblBacteria" id="AAN25120">
    <property type="protein sequence ID" value="AAN25120"/>
    <property type="gene ID" value="BL1320"/>
</dbReference>
<dbReference type="GeneID" id="69578495"/>
<dbReference type="KEGG" id="blo:BL1320"/>
<dbReference type="PATRIC" id="fig|206672.9.peg.171"/>
<dbReference type="HOGENOM" id="CLU_023982_0_1_11"/>
<dbReference type="OrthoDB" id="9805475at2"/>
<dbReference type="PhylomeDB" id="Q8G4Q7"/>
<dbReference type="UniPathway" id="UPA00219"/>
<dbReference type="Proteomes" id="UP000000439">
    <property type="component" value="Chromosome"/>
</dbReference>
<dbReference type="GO" id="GO:0005886">
    <property type="term" value="C:plasma membrane"/>
    <property type="evidence" value="ECO:0007669"/>
    <property type="project" value="UniProtKB-SubCell"/>
</dbReference>
<dbReference type="GO" id="GO:0046872">
    <property type="term" value="F:metal ion binding"/>
    <property type="evidence" value="ECO:0007669"/>
    <property type="project" value="UniProtKB-KW"/>
</dbReference>
<dbReference type="GO" id="GO:0008963">
    <property type="term" value="F:phospho-N-acetylmuramoyl-pentapeptide-transferase activity"/>
    <property type="evidence" value="ECO:0007669"/>
    <property type="project" value="UniProtKB-UniRule"/>
</dbReference>
<dbReference type="GO" id="GO:0051992">
    <property type="term" value="F:UDP-N-acetylmuramoyl-L-alanyl-D-glutamyl-meso-2,6-diaminopimelyl-D-alanyl-D-alanine:undecaprenyl-phosphate transferase activity"/>
    <property type="evidence" value="ECO:0007669"/>
    <property type="project" value="RHEA"/>
</dbReference>
<dbReference type="GO" id="GO:0051301">
    <property type="term" value="P:cell division"/>
    <property type="evidence" value="ECO:0007669"/>
    <property type="project" value="UniProtKB-KW"/>
</dbReference>
<dbReference type="GO" id="GO:0071555">
    <property type="term" value="P:cell wall organization"/>
    <property type="evidence" value="ECO:0007669"/>
    <property type="project" value="UniProtKB-KW"/>
</dbReference>
<dbReference type="GO" id="GO:0009252">
    <property type="term" value="P:peptidoglycan biosynthetic process"/>
    <property type="evidence" value="ECO:0007669"/>
    <property type="project" value="UniProtKB-UniRule"/>
</dbReference>
<dbReference type="GO" id="GO:0008360">
    <property type="term" value="P:regulation of cell shape"/>
    <property type="evidence" value="ECO:0007669"/>
    <property type="project" value="UniProtKB-KW"/>
</dbReference>
<dbReference type="CDD" id="cd06852">
    <property type="entry name" value="GT_MraY"/>
    <property type="match status" value="1"/>
</dbReference>
<dbReference type="HAMAP" id="MF_00038">
    <property type="entry name" value="MraY"/>
    <property type="match status" value="1"/>
</dbReference>
<dbReference type="InterPro" id="IPR000715">
    <property type="entry name" value="Glycosyl_transferase_4"/>
</dbReference>
<dbReference type="InterPro" id="IPR003524">
    <property type="entry name" value="PNAcMuramoyl-5peptid_Trfase"/>
</dbReference>
<dbReference type="InterPro" id="IPR018480">
    <property type="entry name" value="PNAcMuramoyl-5peptid_Trfase_CS"/>
</dbReference>
<dbReference type="NCBIfam" id="TIGR00445">
    <property type="entry name" value="mraY"/>
    <property type="match status" value="1"/>
</dbReference>
<dbReference type="PANTHER" id="PTHR22926">
    <property type="entry name" value="PHOSPHO-N-ACETYLMURAMOYL-PENTAPEPTIDE-TRANSFERASE"/>
    <property type="match status" value="1"/>
</dbReference>
<dbReference type="PANTHER" id="PTHR22926:SF5">
    <property type="entry name" value="PHOSPHO-N-ACETYLMURAMOYL-PENTAPEPTIDE-TRANSFERASE HOMOLOG"/>
    <property type="match status" value="1"/>
</dbReference>
<dbReference type="Pfam" id="PF00953">
    <property type="entry name" value="Glycos_transf_4"/>
    <property type="match status" value="1"/>
</dbReference>
<dbReference type="PROSITE" id="PS01348">
    <property type="entry name" value="MRAY_2"/>
    <property type="match status" value="1"/>
</dbReference>